<name>RM01_SCHPO</name>
<proteinExistence type="inferred from homology"/>
<organism>
    <name type="scientific">Schizosaccharomyces pombe (strain 972 / ATCC 24843)</name>
    <name type="common">Fission yeast</name>
    <dbReference type="NCBI Taxonomy" id="284812"/>
    <lineage>
        <taxon>Eukaryota</taxon>
        <taxon>Fungi</taxon>
        <taxon>Dikarya</taxon>
        <taxon>Ascomycota</taxon>
        <taxon>Taphrinomycotina</taxon>
        <taxon>Schizosaccharomycetes</taxon>
        <taxon>Schizosaccharomycetales</taxon>
        <taxon>Schizosaccharomycetaceae</taxon>
        <taxon>Schizosaccharomyces</taxon>
    </lineage>
</organism>
<gene>
    <name type="primary">mrpl1</name>
    <name type="ORF">SPAC1610.02c</name>
</gene>
<evidence type="ECO:0000250" key="1">
    <source>
        <dbReference type="UniProtKB" id="Q04599"/>
    </source>
</evidence>
<evidence type="ECO:0000255" key="2"/>
<evidence type="ECO:0000305" key="3"/>
<dbReference type="EMBL" id="CU329670">
    <property type="protein sequence ID" value="CAB90309.1"/>
    <property type="molecule type" value="Genomic_DNA"/>
</dbReference>
<dbReference type="RefSeq" id="NP_001018241.2">
    <property type="nucleotide sequence ID" value="NM_001018919.3"/>
</dbReference>
<dbReference type="SMR" id="Q9P6M9"/>
<dbReference type="BioGRID" id="280596">
    <property type="interactions" value="88"/>
</dbReference>
<dbReference type="ComplexPortal" id="CPX-10323">
    <property type="entry name" value="54S mitochondrial large ribosomal subunit"/>
</dbReference>
<dbReference type="FunCoup" id="Q9P6M9">
    <property type="interactions" value="141"/>
</dbReference>
<dbReference type="STRING" id="284812.Q9P6M9"/>
<dbReference type="iPTMnet" id="Q9P6M9"/>
<dbReference type="PaxDb" id="4896-SPAC1610.02c.1"/>
<dbReference type="EnsemblFungi" id="SPAC1610.02c.1">
    <property type="protein sequence ID" value="SPAC1610.02c.1:pep"/>
    <property type="gene ID" value="SPAC1610.02c"/>
</dbReference>
<dbReference type="GeneID" id="3361520"/>
<dbReference type="KEGG" id="spo:3361520"/>
<dbReference type="PomBase" id="SPAC1610.02c">
    <property type="gene designation" value="mrpl1"/>
</dbReference>
<dbReference type="VEuPathDB" id="FungiDB:SPAC1610.02c"/>
<dbReference type="eggNOG" id="KOG1569">
    <property type="taxonomic scope" value="Eukaryota"/>
</dbReference>
<dbReference type="HOGENOM" id="CLU_062853_1_0_1"/>
<dbReference type="InParanoid" id="Q9P6M9"/>
<dbReference type="OMA" id="KTHFKIW"/>
<dbReference type="PhylomeDB" id="Q9P6M9"/>
<dbReference type="PRO" id="PR:Q9P6M9"/>
<dbReference type="Proteomes" id="UP000002485">
    <property type="component" value="Chromosome I"/>
</dbReference>
<dbReference type="GO" id="GO:0005762">
    <property type="term" value="C:mitochondrial large ribosomal subunit"/>
    <property type="evidence" value="ECO:0000318"/>
    <property type="project" value="GO_Central"/>
</dbReference>
<dbReference type="GO" id="GO:0003723">
    <property type="term" value="F:RNA binding"/>
    <property type="evidence" value="ECO:0007669"/>
    <property type="project" value="InterPro"/>
</dbReference>
<dbReference type="GO" id="GO:0003735">
    <property type="term" value="F:structural constituent of ribosome"/>
    <property type="evidence" value="ECO:0000318"/>
    <property type="project" value="GO_Central"/>
</dbReference>
<dbReference type="GO" id="GO:0032543">
    <property type="term" value="P:mitochondrial translation"/>
    <property type="evidence" value="ECO:0000250"/>
    <property type="project" value="PomBase"/>
</dbReference>
<dbReference type="CDD" id="cd00403">
    <property type="entry name" value="Ribosomal_L1"/>
    <property type="match status" value="1"/>
</dbReference>
<dbReference type="Gene3D" id="3.30.190.20">
    <property type="match status" value="1"/>
</dbReference>
<dbReference type="Gene3D" id="3.40.50.790">
    <property type="match status" value="1"/>
</dbReference>
<dbReference type="InterPro" id="IPR002143">
    <property type="entry name" value="Ribosomal_uL1"/>
</dbReference>
<dbReference type="InterPro" id="IPR023674">
    <property type="entry name" value="Ribosomal_uL1-like"/>
</dbReference>
<dbReference type="InterPro" id="IPR028364">
    <property type="entry name" value="Ribosomal_uL1/biogenesis"/>
</dbReference>
<dbReference type="InterPro" id="IPR016095">
    <property type="entry name" value="Ribosomal_uL1_3-a/b-sand"/>
</dbReference>
<dbReference type="InterPro" id="IPR005879">
    <property type="entry name" value="Ribosomal_uL1_mit"/>
</dbReference>
<dbReference type="NCBIfam" id="TIGR01170">
    <property type="entry name" value="rplA_mito"/>
    <property type="match status" value="1"/>
</dbReference>
<dbReference type="PANTHER" id="PTHR36427">
    <property type="entry name" value="54S RIBOSOMAL PROTEIN L1, MITOCHONDRIAL"/>
    <property type="match status" value="1"/>
</dbReference>
<dbReference type="PANTHER" id="PTHR36427:SF3">
    <property type="entry name" value="LARGE RIBOSOMAL SUBUNIT PROTEIN UL1M"/>
    <property type="match status" value="1"/>
</dbReference>
<dbReference type="Pfam" id="PF00687">
    <property type="entry name" value="Ribosomal_L1"/>
    <property type="match status" value="1"/>
</dbReference>
<dbReference type="PIRSF" id="PIRSF002155">
    <property type="entry name" value="Ribosomal_L1"/>
    <property type="match status" value="1"/>
</dbReference>
<dbReference type="SUPFAM" id="SSF56808">
    <property type="entry name" value="Ribosomal protein L1"/>
    <property type="match status" value="1"/>
</dbReference>
<accession>Q9P6M9</accession>
<feature type="transit peptide" description="Mitochondrion" evidence="2">
    <location>
        <begin position="1"/>
        <end position="81"/>
    </location>
</feature>
<feature type="chain" id="PRO_0000314110" description="Large ribosomal subunit protein uL1m">
    <location>
        <begin position="82"/>
        <end position="253"/>
    </location>
</feature>
<protein>
    <recommendedName>
        <fullName evidence="3">Large ribosomal subunit protein uL1m</fullName>
    </recommendedName>
    <alternativeName>
        <fullName>54S ribosomal protein L1, mitochondrial</fullName>
    </alternativeName>
</protein>
<comment type="function">
    <text evidence="1">Component of the mitochondrial ribosome (mitoribosome), a dedicated translation machinery responsible for the synthesis of mitochondrial genome-encoded proteins, including at least some of the essential transmembrane subunits of the mitochondrial respiratory chain. The mitoribosomes are attached to the mitochondrial inner membrane and translation products are cotranslationally integrated into the membrane.</text>
</comment>
<comment type="subunit">
    <text evidence="1">Component of the mitochondrial large ribosomal subunit (mt-LSU). Mature yeast 74S mitochondrial ribosomes consist of a small (37S) and a large (54S) subunit. The 37S small subunit contains a 15S ribosomal RNA (15S mt-rRNA) and at least 32 different proteins. The 54S large subunit contains a 21S rRNA (21S mt-rRNA) and at least 45 different proteins.</text>
</comment>
<comment type="subcellular location">
    <subcellularLocation>
        <location evidence="1">Mitochondrion</location>
    </subcellularLocation>
</comment>
<comment type="similarity">
    <text evidence="3">Belongs to the universal ribosomal protein uL1 family.</text>
</comment>
<keyword id="KW-0496">Mitochondrion</keyword>
<keyword id="KW-1185">Reference proteome</keyword>
<keyword id="KW-0687">Ribonucleoprotein</keyword>
<keyword id="KW-0689">Ribosomal protein</keyword>
<keyword id="KW-0809">Transit peptide</keyword>
<sequence>MSSLIALGKRQTLLSHNEFLNFKNQKGFCKRFISQLNKKSNFPALAMTVPEATKYLKSVSISVPYVGSYMLSIALKSNRRAPSARGQIAFPHPFQEPPKICVFAKGAAADEALKLGATYVGAEDLVKKIQTEPLEFSKCFAHPNSAELLPQVAKLLGSKRLMPSIKRGTISDELKPLIESALTAVDYRQNDAGSINLPVGKLGFSDKELQENIEALVSNVRFTLAKLPGKVKVTVKHVHLSASHAIAIPLQYK</sequence>
<reference key="1">
    <citation type="journal article" date="2002" name="Nature">
        <title>The genome sequence of Schizosaccharomyces pombe.</title>
        <authorList>
            <person name="Wood V."/>
            <person name="Gwilliam R."/>
            <person name="Rajandream M.A."/>
            <person name="Lyne M.H."/>
            <person name="Lyne R."/>
            <person name="Stewart A."/>
            <person name="Sgouros J.G."/>
            <person name="Peat N."/>
            <person name="Hayles J."/>
            <person name="Baker S.G."/>
            <person name="Basham D."/>
            <person name="Bowman S."/>
            <person name="Brooks K."/>
            <person name="Brown D."/>
            <person name="Brown S."/>
            <person name="Chillingworth T."/>
            <person name="Churcher C.M."/>
            <person name="Collins M."/>
            <person name="Connor R."/>
            <person name="Cronin A."/>
            <person name="Davis P."/>
            <person name="Feltwell T."/>
            <person name="Fraser A."/>
            <person name="Gentles S."/>
            <person name="Goble A."/>
            <person name="Hamlin N."/>
            <person name="Harris D.E."/>
            <person name="Hidalgo J."/>
            <person name="Hodgson G."/>
            <person name="Holroyd S."/>
            <person name="Hornsby T."/>
            <person name="Howarth S."/>
            <person name="Huckle E.J."/>
            <person name="Hunt S."/>
            <person name="Jagels K."/>
            <person name="James K.D."/>
            <person name="Jones L."/>
            <person name="Jones M."/>
            <person name="Leather S."/>
            <person name="McDonald S."/>
            <person name="McLean J."/>
            <person name="Mooney P."/>
            <person name="Moule S."/>
            <person name="Mungall K.L."/>
            <person name="Murphy L.D."/>
            <person name="Niblett D."/>
            <person name="Odell C."/>
            <person name="Oliver K."/>
            <person name="O'Neil S."/>
            <person name="Pearson D."/>
            <person name="Quail M.A."/>
            <person name="Rabbinowitsch E."/>
            <person name="Rutherford K.M."/>
            <person name="Rutter S."/>
            <person name="Saunders D."/>
            <person name="Seeger K."/>
            <person name="Sharp S."/>
            <person name="Skelton J."/>
            <person name="Simmonds M.N."/>
            <person name="Squares R."/>
            <person name="Squares S."/>
            <person name="Stevens K."/>
            <person name="Taylor K."/>
            <person name="Taylor R.G."/>
            <person name="Tivey A."/>
            <person name="Walsh S.V."/>
            <person name="Warren T."/>
            <person name="Whitehead S."/>
            <person name="Woodward J.R."/>
            <person name="Volckaert G."/>
            <person name="Aert R."/>
            <person name="Robben J."/>
            <person name="Grymonprez B."/>
            <person name="Weltjens I."/>
            <person name="Vanstreels E."/>
            <person name="Rieger M."/>
            <person name="Schaefer M."/>
            <person name="Mueller-Auer S."/>
            <person name="Gabel C."/>
            <person name="Fuchs M."/>
            <person name="Duesterhoeft A."/>
            <person name="Fritzc C."/>
            <person name="Holzer E."/>
            <person name="Moestl D."/>
            <person name="Hilbert H."/>
            <person name="Borzym K."/>
            <person name="Langer I."/>
            <person name="Beck A."/>
            <person name="Lehrach H."/>
            <person name="Reinhardt R."/>
            <person name="Pohl T.M."/>
            <person name="Eger P."/>
            <person name="Zimmermann W."/>
            <person name="Wedler H."/>
            <person name="Wambutt R."/>
            <person name="Purnelle B."/>
            <person name="Goffeau A."/>
            <person name="Cadieu E."/>
            <person name="Dreano S."/>
            <person name="Gloux S."/>
            <person name="Lelaure V."/>
            <person name="Mottier S."/>
            <person name="Galibert F."/>
            <person name="Aves S.J."/>
            <person name="Xiang Z."/>
            <person name="Hunt C."/>
            <person name="Moore K."/>
            <person name="Hurst S.M."/>
            <person name="Lucas M."/>
            <person name="Rochet M."/>
            <person name="Gaillardin C."/>
            <person name="Tallada V.A."/>
            <person name="Garzon A."/>
            <person name="Thode G."/>
            <person name="Daga R.R."/>
            <person name="Cruzado L."/>
            <person name="Jimenez J."/>
            <person name="Sanchez M."/>
            <person name="del Rey F."/>
            <person name="Benito J."/>
            <person name="Dominguez A."/>
            <person name="Revuelta J.L."/>
            <person name="Moreno S."/>
            <person name="Armstrong J."/>
            <person name="Forsburg S.L."/>
            <person name="Cerutti L."/>
            <person name="Lowe T."/>
            <person name="McCombie W.R."/>
            <person name="Paulsen I."/>
            <person name="Potashkin J."/>
            <person name="Shpakovski G.V."/>
            <person name="Ussery D."/>
            <person name="Barrell B.G."/>
            <person name="Nurse P."/>
        </authorList>
    </citation>
    <scope>NUCLEOTIDE SEQUENCE [LARGE SCALE GENOMIC DNA]</scope>
    <source>
        <strain>972 / ATCC 24843</strain>
    </source>
</reference>